<comment type="function">
    <text evidence="1">Component of LSm protein complexes, which are involved in RNA processing and may function in a chaperone-like manner, facilitating the efficient association of RNA processing factors with their substrates. Component of the cytoplasmic LSM1-LSM7 complex, which is thought to be involved in mRNA degradation by activating the decapping step in the 5'-to-3' mRNA decay pathway. Component of the nuclear LSM2-LSM8 complex, which is involved in splicing of nuclear mRNAs. LSM2-LSM8 associates with multiple snRNP complexes containing the U6 snRNA (U4/U6 di-snRNP, spliceosomal U4/U6.U5 tri-snRNP, and free U6 snRNP). It binds directly to the 3'-terminal U-tract of U6 snRNA and plays a role in the biogenesis and stability of the U6 snRNP and U4/U6 snRNP complexes. LSM2-LSM8 probably also is involved degradation of nuclear pre-mRNA by targeting them for decapping, and in processing of pre-tRNAs, pre-rRNAs and U3 snoRNA (By similarity).</text>
</comment>
<comment type="subunit">
    <text evidence="1">Component of the heptameric LSM1-LSM7 complex, which consists of lsm1, lsm2, lsm3, lsm4, lsm5, lsm6 and lsm7. Component of the heptameric LSM2-LSM8 complex, which consists of lsm2, lsm3, lsm4, lsm5, lsm6, lsm7 and lsm8. The LSm subunits form a seven-membered ring structure with a doughnut shape (By similarity).</text>
</comment>
<comment type="subcellular location">
    <subcellularLocation>
        <location evidence="1">Cytoplasm</location>
    </subcellularLocation>
    <subcellularLocation>
        <location evidence="1">Nucleus</location>
    </subcellularLocation>
</comment>
<comment type="similarity">
    <text evidence="3">Belongs to the snRNP Sm proteins family. SmF/LSm6 subfamily.</text>
</comment>
<comment type="sequence caution" evidence="3">
    <conflict type="erroneous gene model prediction">
        <sequence resource="EMBL-CDS" id="EAW11118"/>
    </conflict>
</comment>
<gene>
    <name type="primary">lsm6</name>
    <name type="ORF">ACLA_088070</name>
</gene>
<proteinExistence type="inferred from homology"/>
<evidence type="ECO:0000250" key="1"/>
<evidence type="ECO:0000255" key="2">
    <source>
        <dbReference type="PROSITE-ProRule" id="PRU01346"/>
    </source>
</evidence>
<evidence type="ECO:0000305" key="3"/>
<feature type="chain" id="PRO_0000333588" description="U6 snRNA-associated Sm-like protein LSm6">
    <location>
        <begin position="1"/>
        <end position="78"/>
    </location>
</feature>
<feature type="domain" description="Sm" evidence="2">
    <location>
        <begin position="10"/>
        <end position="78"/>
    </location>
</feature>
<reference key="1">
    <citation type="journal article" date="2008" name="PLoS Genet.">
        <title>Genomic islands in the pathogenic filamentous fungus Aspergillus fumigatus.</title>
        <authorList>
            <person name="Fedorova N.D."/>
            <person name="Khaldi N."/>
            <person name="Joardar V.S."/>
            <person name="Maiti R."/>
            <person name="Amedeo P."/>
            <person name="Anderson M.J."/>
            <person name="Crabtree J."/>
            <person name="Silva J.C."/>
            <person name="Badger J.H."/>
            <person name="Albarraq A."/>
            <person name="Angiuoli S."/>
            <person name="Bussey H."/>
            <person name="Bowyer P."/>
            <person name="Cotty P.J."/>
            <person name="Dyer P.S."/>
            <person name="Egan A."/>
            <person name="Galens K."/>
            <person name="Fraser-Liggett C.M."/>
            <person name="Haas B.J."/>
            <person name="Inman J.M."/>
            <person name="Kent R."/>
            <person name="Lemieux S."/>
            <person name="Malavazi I."/>
            <person name="Orvis J."/>
            <person name="Roemer T."/>
            <person name="Ronning C.M."/>
            <person name="Sundaram J.P."/>
            <person name="Sutton G."/>
            <person name="Turner G."/>
            <person name="Venter J.C."/>
            <person name="White O.R."/>
            <person name="Whitty B.R."/>
            <person name="Youngman P."/>
            <person name="Wolfe K.H."/>
            <person name="Goldman G.H."/>
            <person name="Wortman J.R."/>
            <person name="Jiang B."/>
            <person name="Denning D.W."/>
            <person name="Nierman W.C."/>
        </authorList>
    </citation>
    <scope>NUCLEOTIDE SEQUENCE [LARGE SCALE GENOMIC DNA]</scope>
    <source>
        <strain>ATCC 1007 / CBS 513.65 / DSM 816 / NCTC 3887 / NRRL 1 / QM 1276 / 107</strain>
    </source>
</reference>
<accession>A1CE19</accession>
<organism>
    <name type="scientific">Aspergillus clavatus (strain ATCC 1007 / CBS 513.65 / DSM 816 / NCTC 3887 / NRRL 1 / QM 1276 / 107)</name>
    <dbReference type="NCBI Taxonomy" id="344612"/>
    <lineage>
        <taxon>Eukaryota</taxon>
        <taxon>Fungi</taxon>
        <taxon>Dikarya</taxon>
        <taxon>Ascomycota</taxon>
        <taxon>Pezizomycotina</taxon>
        <taxon>Eurotiomycetes</taxon>
        <taxon>Eurotiomycetidae</taxon>
        <taxon>Eurotiales</taxon>
        <taxon>Aspergillaceae</taxon>
        <taxon>Aspergillus</taxon>
        <taxon>Aspergillus subgen. Fumigati</taxon>
    </lineage>
</organism>
<sequence>MENISSEGRDPSAFLSEIIGAPVTVKLNSGVVYKGELQSVDGYMNIALEQSKEFMDGKLRRSYGDAFIRGNNVLYIAA</sequence>
<keyword id="KW-0963">Cytoplasm</keyword>
<keyword id="KW-0507">mRNA processing</keyword>
<keyword id="KW-0508">mRNA splicing</keyword>
<keyword id="KW-0539">Nucleus</keyword>
<keyword id="KW-1185">Reference proteome</keyword>
<keyword id="KW-0687">Ribonucleoprotein</keyword>
<keyword id="KW-0694">RNA-binding</keyword>
<keyword id="KW-0698">rRNA processing</keyword>
<keyword id="KW-0747">Spliceosome</keyword>
<keyword id="KW-0819">tRNA processing</keyword>
<protein>
    <recommendedName>
        <fullName>U6 snRNA-associated Sm-like protein LSm6</fullName>
    </recommendedName>
</protein>
<name>LSM6_ASPCL</name>
<dbReference type="EMBL" id="DS027052">
    <property type="protein sequence ID" value="EAW11118.1"/>
    <property type="status" value="ALT_SEQ"/>
    <property type="molecule type" value="Genomic_DNA"/>
</dbReference>
<dbReference type="RefSeq" id="XP_001272544.1">
    <property type="nucleotide sequence ID" value="XM_001272543.1"/>
</dbReference>
<dbReference type="SMR" id="A1CE19"/>
<dbReference type="STRING" id="344612.A1CE19"/>
<dbReference type="GeneID" id="4704721"/>
<dbReference type="KEGG" id="act:ACLA_088070"/>
<dbReference type="eggNOG" id="KOG1783">
    <property type="taxonomic scope" value="Eukaryota"/>
</dbReference>
<dbReference type="OrthoDB" id="268799at2759"/>
<dbReference type="Proteomes" id="UP000006701">
    <property type="component" value="Unassembled WGS sequence"/>
</dbReference>
<dbReference type="GO" id="GO:1990726">
    <property type="term" value="C:Lsm1-7-Pat1 complex"/>
    <property type="evidence" value="ECO:0007669"/>
    <property type="project" value="EnsemblFungi"/>
</dbReference>
<dbReference type="GO" id="GO:0005730">
    <property type="term" value="C:nucleolus"/>
    <property type="evidence" value="ECO:0007669"/>
    <property type="project" value="EnsemblFungi"/>
</dbReference>
<dbReference type="GO" id="GO:0000932">
    <property type="term" value="C:P-body"/>
    <property type="evidence" value="ECO:0007669"/>
    <property type="project" value="EnsemblFungi"/>
</dbReference>
<dbReference type="GO" id="GO:0005732">
    <property type="term" value="C:sno(s)RNA-containing ribonucleoprotein complex"/>
    <property type="evidence" value="ECO:0007669"/>
    <property type="project" value="EnsemblFungi"/>
</dbReference>
<dbReference type="GO" id="GO:0005681">
    <property type="term" value="C:spliceosomal complex"/>
    <property type="evidence" value="ECO:0007669"/>
    <property type="project" value="UniProtKB-KW"/>
</dbReference>
<dbReference type="GO" id="GO:0046540">
    <property type="term" value="C:U4/U6 x U5 tri-snRNP complex"/>
    <property type="evidence" value="ECO:0007669"/>
    <property type="project" value="EnsemblFungi"/>
</dbReference>
<dbReference type="GO" id="GO:0005688">
    <property type="term" value="C:U6 snRNP"/>
    <property type="evidence" value="ECO:0007669"/>
    <property type="project" value="EnsemblFungi"/>
</dbReference>
<dbReference type="GO" id="GO:0003723">
    <property type="term" value="F:RNA binding"/>
    <property type="evidence" value="ECO:0007669"/>
    <property type="project" value="UniProtKB-KW"/>
</dbReference>
<dbReference type="GO" id="GO:0000290">
    <property type="term" value="P:deadenylation-dependent decapping of nuclear-transcribed mRNA"/>
    <property type="evidence" value="ECO:0007669"/>
    <property type="project" value="EnsemblFungi"/>
</dbReference>
<dbReference type="GO" id="GO:0030490">
    <property type="term" value="P:maturation of SSU-rRNA"/>
    <property type="evidence" value="ECO:0007669"/>
    <property type="project" value="EnsemblFungi"/>
</dbReference>
<dbReference type="GO" id="GO:0000398">
    <property type="term" value="P:mRNA splicing, via spliceosome"/>
    <property type="evidence" value="ECO:0007669"/>
    <property type="project" value="EnsemblFungi"/>
</dbReference>
<dbReference type="GO" id="GO:0008033">
    <property type="term" value="P:tRNA processing"/>
    <property type="evidence" value="ECO:0007669"/>
    <property type="project" value="UniProtKB-KW"/>
</dbReference>
<dbReference type="CDD" id="cd01726">
    <property type="entry name" value="LSm6"/>
    <property type="match status" value="1"/>
</dbReference>
<dbReference type="FunFam" id="2.30.30.100:FF:000037">
    <property type="entry name" value="U6 snRNA-associated Sm-like protein LSm6"/>
    <property type="match status" value="1"/>
</dbReference>
<dbReference type="Gene3D" id="2.30.30.100">
    <property type="match status" value="1"/>
</dbReference>
<dbReference type="InterPro" id="IPR016487">
    <property type="entry name" value="Lsm6/sSmF"/>
</dbReference>
<dbReference type="InterPro" id="IPR010920">
    <property type="entry name" value="LSM_dom_sf"/>
</dbReference>
<dbReference type="InterPro" id="IPR047575">
    <property type="entry name" value="Sm"/>
</dbReference>
<dbReference type="InterPro" id="IPR001163">
    <property type="entry name" value="Sm_dom_euk/arc"/>
</dbReference>
<dbReference type="PANTHER" id="PTHR11021">
    <property type="entry name" value="SMALL NUCLEAR RIBONUCLEOPROTEIN F SNRNP-F"/>
    <property type="match status" value="1"/>
</dbReference>
<dbReference type="PANTHER" id="PTHR11021:SF1">
    <property type="entry name" value="U6 SNRNA-ASSOCIATED SM-LIKE PROTEIN LSM6"/>
    <property type="match status" value="1"/>
</dbReference>
<dbReference type="Pfam" id="PF01423">
    <property type="entry name" value="LSM"/>
    <property type="match status" value="1"/>
</dbReference>
<dbReference type="PIRSF" id="PIRSF006609">
    <property type="entry name" value="snRNP_SmF"/>
    <property type="match status" value="1"/>
</dbReference>
<dbReference type="SMART" id="SM00651">
    <property type="entry name" value="Sm"/>
    <property type="match status" value="1"/>
</dbReference>
<dbReference type="SUPFAM" id="SSF50182">
    <property type="entry name" value="Sm-like ribonucleoproteins"/>
    <property type="match status" value="1"/>
</dbReference>
<dbReference type="PROSITE" id="PS52002">
    <property type="entry name" value="SM"/>
    <property type="match status" value="1"/>
</dbReference>